<proteinExistence type="inferred from homology"/>
<gene>
    <name type="ordered locus">alr4393</name>
</gene>
<dbReference type="EMBL" id="BA000019">
    <property type="protein sequence ID" value="BAB76092.1"/>
    <property type="molecule type" value="Genomic_DNA"/>
</dbReference>
<dbReference type="EMBL" id="L10036">
    <property type="protein sequence ID" value="AAD04182.1"/>
    <property type="molecule type" value="Genomic_DNA"/>
</dbReference>
<dbReference type="PIR" id="AI2354">
    <property type="entry name" value="AI2354"/>
</dbReference>
<dbReference type="RefSeq" id="WP_010998530.1">
    <property type="nucleotide sequence ID" value="NZ_RSCN01000051.1"/>
</dbReference>
<dbReference type="SMR" id="Q05070"/>
<dbReference type="STRING" id="103690.gene:10496442"/>
<dbReference type="KEGG" id="ana:alr4393"/>
<dbReference type="eggNOG" id="COG4372">
    <property type="taxonomic scope" value="Bacteria"/>
</dbReference>
<dbReference type="OrthoDB" id="9812848at2"/>
<dbReference type="Proteomes" id="UP000002483">
    <property type="component" value="Chromosome"/>
</dbReference>
<dbReference type="GO" id="GO:0016020">
    <property type="term" value="C:membrane"/>
    <property type="evidence" value="ECO:0007669"/>
    <property type="project" value="UniProtKB-SubCell"/>
</dbReference>
<dbReference type="InterPro" id="IPR021435">
    <property type="entry name" value="DUF3084"/>
</dbReference>
<dbReference type="Pfam" id="PF11283">
    <property type="entry name" value="DUF3084"/>
    <property type="match status" value="1"/>
</dbReference>
<protein>
    <recommendedName>
        <fullName>Uncharacterized protein alr4393</fullName>
    </recommendedName>
</protein>
<comment type="subcellular location">
    <subcellularLocation>
        <location evidence="3">Membrane</location>
        <topology evidence="3">Single-pass membrane protein</topology>
    </subcellularLocation>
</comment>
<organism>
    <name type="scientific">Nostoc sp. (strain PCC 7120 / SAG 25.82 / UTEX 2576)</name>
    <dbReference type="NCBI Taxonomy" id="103690"/>
    <lineage>
        <taxon>Bacteria</taxon>
        <taxon>Bacillati</taxon>
        <taxon>Cyanobacteriota</taxon>
        <taxon>Cyanophyceae</taxon>
        <taxon>Nostocales</taxon>
        <taxon>Nostocaceae</taxon>
        <taxon>Nostoc</taxon>
    </lineage>
</organism>
<sequence>MTTGYILIAAILILGGVIATVGDRIGTRVGKARLSLFNLRPKNTAVLVTILTGGLVSATTLAILFIADEGLRKGVFELEDIQKDLRQKREQLKVAEEQKTQVEIERNKVNQELETTRTDKKQVETQRDQAKKEKLKAQQDLAQTQAQYQRTQSRLGQVVTQYQKAIAELQSVYNQRKALQGAVEQLKTERRRLYAEAKKAIEQRDRELANRQQAIEQRDRELANRQQALQQRDQKISQLDKIIQNRNLEIAQREEVIAKRESRLKELETQQDYLEQEVARLEKYYQSYRDLRLGKLALVRGQVLASAVIRTNQVAATRQIIIQLLQEANRNASLELSEPGSNSANIELLRITPDRIEQLIQQINDGREYVVRIFSAGNYVRGENQIEFFADTARNVLVFSGSEVLATTTADPRSMTSYQLRQRLDLLISASQFRARNAGIVEGVQIDGTFLRFVSLLRQLDQPIEIKAIAAEDTYTAGPLRVRLVAIQNGKVILST</sequence>
<accession>Q05070</accession>
<keyword id="KW-0472">Membrane</keyword>
<keyword id="KW-1185">Reference proteome</keyword>
<keyword id="KW-0732">Signal</keyword>
<keyword id="KW-0812">Transmembrane</keyword>
<keyword id="KW-1133">Transmembrane helix</keyword>
<feature type="signal peptide" evidence="1">
    <location>
        <begin position="1"/>
        <end position="19"/>
    </location>
</feature>
<feature type="chain" id="PRO_0000013611" description="Uncharacterized protein alr4393">
    <location>
        <begin position="20"/>
        <end position="496"/>
    </location>
</feature>
<feature type="transmembrane region" description="Helical" evidence="1">
    <location>
        <begin position="45"/>
        <end position="67"/>
    </location>
</feature>
<feature type="region of interest" description="Disordered" evidence="2">
    <location>
        <begin position="113"/>
        <end position="137"/>
    </location>
</feature>
<name>Y4393_NOSS1</name>
<reference key="1">
    <citation type="journal article" date="2001" name="DNA Res.">
        <title>Complete genomic sequence of the filamentous nitrogen-fixing cyanobacterium Anabaena sp. strain PCC 7120.</title>
        <authorList>
            <person name="Kaneko T."/>
            <person name="Nakamura Y."/>
            <person name="Wolk C.P."/>
            <person name="Kuritz T."/>
            <person name="Sasamoto S."/>
            <person name="Watanabe A."/>
            <person name="Iriguchi M."/>
            <person name="Ishikawa A."/>
            <person name="Kawashima K."/>
            <person name="Kimura T."/>
            <person name="Kishida Y."/>
            <person name="Kohara M."/>
            <person name="Matsumoto M."/>
            <person name="Matsuno A."/>
            <person name="Muraki A."/>
            <person name="Nakazaki N."/>
            <person name="Shimpo S."/>
            <person name="Sugimoto M."/>
            <person name="Takazawa M."/>
            <person name="Yamada M."/>
            <person name="Yasuda M."/>
            <person name="Tabata S."/>
        </authorList>
    </citation>
    <scope>NUCLEOTIDE SEQUENCE [LARGE SCALE GENOMIC DNA]</scope>
    <source>
        <strain>PCC 7120 / SAG 25.82 / UTEX 2576</strain>
    </source>
</reference>
<reference key="2">
    <citation type="journal article" date="1993" name="J. Bacteriol.">
        <title>Anabaena sp. strain PCC 7120 bifA gene encoding a sequence-specific DNA-binding protein cloned by in vivo transcriptional interference selection.</title>
        <authorList>
            <person name="Wei T.-F."/>
            <person name="Ramasubramanian T.S."/>
            <person name="Pu F."/>
            <person name="Golden J.W."/>
        </authorList>
    </citation>
    <scope>NUCLEOTIDE SEQUENCE [GENOMIC DNA] OF 1-166</scope>
</reference>
<evidence type="ECO:0000255" key="1"/>
<evidence type="ECO:0000256" key="2">
    <source>
        <dbReference type="SAM" id="MobiDB-lite"/>
    </source>
</evidence>
<evidence type="ECO:0000305" key="3"/>